<feature type="peptide" id="PRO_0000378787" description="Periviscerokinin-2" evidence="2">
    <location>
        <begin position="1"/>
        <end position="11"/>
    </location>
</feature>
<feature type="modified residue" description="Valine amide" evidence="2">
    <location>
        <position position="11"/>
    </location>
</feature>
<accession>P85615</accession>
<keyword id="KW-0027">Amidation</keyword>
<keyword id="KW-0903">Direct protein sequencing</keyword>
<keyword id="KW-0527">Neuropeptide</keyword>
<keyword id="KW-0964">Secreted</keyword>
<sequence length="11" mass="1103">GSSGLISMPRV</sequence>
<reference evidence="4" key="1">
    <citation type="journal article" date="2009" name="BMC Evol. Biol.">
        <title>A proteomic approach for studying insect phylogeny: CAPA peptides of ancient insect taxa (Dictyoptera, Blattoptera) as a test case.</title>
        <authorList>
            <person name="Roth S."/>
            <person name="Fromm B."/>
            <person name="Gaede G."/>
            <person name="Predel R."/>
        </authorList>
    </citation>
    <scope>PROTEIN SEQUENCE</scope>
    <scope>AMIDATION AT VAL-11</scope>
    <source>
        <tissue evidence="2">Abdominal perisympathetic organs</tissue>
    </source>
</reference>
<proteinExistence type="evidence at protein level"/>
<evidence type="ECO:0000255" key="1"/>
<evidence type="ECO:0000269" key="2">
    <source>
    </source>
</evidence>
<evidence type="ECO:0000303" key="3">
    <source>
    </source>
</evidence>
<evidence type="ECO:0000305" key="4"/>
<comment type="function">
    <text evidence="4">Mediates visceral muscle contractile activity (myotropic activity).</text>
</comment>
<comment type="subcellular location">
    <subcellularLocation>
        <location evidence="4">Secreted</location>
    </subcellularLocation>
</comment>
<comment type="similarity">
    <text evidence="1">Belongs to the periviscerokinin family.</text>
</comment>
<protein>
    <recommendedName>
        <fullName evidence="3">Periviscerokinin-2</fullName>
        <shortName evidence="3">EubDi-PVK-2</shortName>
    </recommendedName>
</protein>
<organism>
    <name type="scientific">Eublaberus distanti</name>
    <name type="common">Four-spotted cockroach</name>
    <dbReference type="NCBI Taxonomy" id="424761"/>
    <lineage>
        <taxon>Eukaryota</taxon>
        <taxon>Metazoa</taxon>
        <taxon>Ecdysozoa</taxon>
        <taxon>Arthropoda</taxon>
        <taxon>Hexapoda</taxon>
        <taxon>Insecta</taxon>
        <taxon>Pterygota</taxon>
        <taxon>Neoptera</taxon>
        <taxon>Polyneoptera</taxon>
        <taxon>Dictyoptera</taxon>
        <taxon>Blattodea</taxon>
        <taxon>Blaberoidea</taxon>
        <taxon>Blaberidae</taxon>
        <taxon>Blaberinae</taxon>
        <taxon>Eublaberus</taxon>
    </lineage>
</organism>
<name>PVK2_EUBDI</name>
<dbReference type="GO" id="GO:0005576">
    <property type="term" value="C:extracellular region"/>
    <property type="evidence" value="ECO:0007669"/>
    <property type="project" value="UniProtKB-SubCell"/>
</dbReference>
<dbReference type="GO" id="GO:0007218">
    <property type="term" value="P:neuropeptide signaling pathway"/>
    <property type="evidence" value="ECO:0007669"/>
    <property type="project" value="UniProtKB-KW"/>
</dbReference>
<dbReference type="InterPro" id="IPR013231">
    <property type="entry name" value="Periviscerokinin"/>
</dbReference>
<dbReference type="Pfam" id="PF08259">
    <property type="entry name" value="Periviscerokin"/>
    <property type="match status" value="1"/>
</dbReference>